<proteinExistence type="evidence at protein level"/>
<gene>
    <name type="primary">ZNF12</name>
    <name type="synonym">GIOT3</name>
    <name type="synonym">KOX3</name>
    <name type="synonym">ZNF325</name>
</gene>
<feature type="chain" id="PRO_0000047335" description="Zinc finger protein 12">
    <location>
        <begin position="1"/>
        <end position="697"/>
    </location>
</feature>
<feature type="domain" description="KRAB" evidence="3">
    <location>
        <begin position="8"/>
        <end position="79"/>
    </location>
</feature>
<feature type="zinc finger region" description="C2H2-type 1" evidence="2">
    <location>
        <begin position="269"/>
        <end position="291"/>
    </location>
</feature>
<feature type="zinc finger region" description="C2H2-type 2" evidence="2">
    <location>
        <begin position="297"/>
        <end position="319"/>
    </location>
</feature>
<feature type="zinc finger region" description="C2H2-type 3" evidence="2">
    <location>
        <begin position="325"/>
        <end position="347"/>
    </location>
</feature>
<feature type="zinc finger region" description="C2H2-type 4" evidence="2">
    <location>
        <begin position="353"/>
        <end position="375"/>
    </location>
</feature>
<feature type="zinc finger region" description="C2H2-type 5" evidence="2">
    <location>
        <begin position="381"/>
        <end position="403"/>
    </location>
</feature>
<feature type="zinc finger region" description="C2H2-type 6" evidence="2">
    <location>
        <begin position="409"/>
        <end position="431"/>
    </location>
</feature>
<feature type="zinc finger region" description="C2H2-type 7" evidence="2">
    <location>
        <begin position="437"/>
        <end position="459"/>
    </location>
</feature>
<feature type="zinc finger region" description="C2H2-type 8" evidence="2">
    <location>
        <begin position="465"/>
        <end position="487"/>
    </location>
</feature>
<feature type="zinc finger region" description="C2H2-type 9" evidence="2">
    <location>
        <begin position="493"/>
        <end position="515"/>
    </location>
</feature>
<feature type="zinc finger region" description="C2H2-type 10" evidence="2">
    <location>
        <begin position="521"/>
        <end position="543"/>
    </location>
</feature>
<feature type="zinc finger region" description="C2H2-type 11" evidence="2">
    <location>
        <begin position="549"/>
        <end position="571"/>
    </location>
</feature>
<feature type="zinc finger region" description="C2H2-type 12" evidence="2">
    <location>
        <begin position="577"/>
        <end position="599"/>
    </location>
</feature>
<feature type="zinc finger region" description="C2H2-type 13" evidence="2">
    <location>
        <begin position="605"/>
        <end position="627"/>
    </location>
</feature>
<feature type="zinc finger region" description="C2H2-type 14" evidence="2">
    <location>
        <begin position="633"/>
        <end position="655"/>
    </location>
</feature>
<feature type="zinc finger region" description="C2H2-type 15" evidence="2">
    <location>
        <begin position="661"/>
        <end position="683"/>
    </location>
</feature>
<feature type="cross-link" description="Glycyl lysine isopeptide (Lys-Gly) (interchain with G-Cter in SUMO2)" evidence="13">
    <location>
        <position position="3"/>
    </location>
</feature>
<feature type="cross-link" description="Glycyl lysine isopeptide (Lys-Gly) (interchain with G-Cter in SUMO2)" evidence="11 13">
    <location>
        <position position="98"/>
    </location>
</feature>
<feature type="cross-link" description="Glycyl lysine isopeptide (Lys-Gly) (interchain with G-Cter in SUMO2)" evidence="10 12 13">
    <location>
        <position position="179"/>
    </location>
</feature>
<feature type="cross-link" description="Glycyl lysine isopeptide (Lys-Gly) (interchain with G-Cter in SUMO2)" evidence="13">
    <location>
        <position position="182"/>
    </location>
</feature>
<feature type="cross-link" description="Glycyl lysine isopeptide (Lys-Gly) (interchain with G-Cter in SUMO2)" evidence="13">
    <location>
        <position position="209"/>
    </location>
</feature>
<feature type="cross-link" description="Glycyl lysine isopeptide (Lys-Gly) (interchain with G-Cter in SUMO2)" evidence="13">
    <location>
        <position position="215"/>
    </location>
</feature>
<feature type="cross-link" description="Glycyl lysine isopeptide (Lys-Gly) (interchain with G-Cter in SUMO2)" evidence="13">
    <location>
        <position position="224"/>
    </location>
</feature>
<feature type="cross-link" description="Glycyl lysine isopeptide (Lys-Gly) (interchain with G-Cter in SUMO2)" evidence="11 13">
    <location>
        <position position="239"/>
    </location>
</feature>
<feature type="cross-link" description="Glycyl lysine isopeptide (Lys-Gly) (interchain with G-Cter in SUMO2)" evidence="1">
    <location>
        <position position="267"/>
    </location>
</feature>
<feature type="cross-link" description="Glycyl lysine isopeptide (Lys-Gly) (interchain with G-Cter in SUMO2)" evidence="13">
    <location>
        <position position="309"/>
    </location>
</feature>
<feature type="cross-link" description="Glycyl lysine isopeptide (Lys-Gly) (interchain with G-Cter in SUMO2)" evidence="1">
    <location>
        <position position="323"/>
    </location>
</feature>
<feature type="cross-link" description="Glycyl lysine isopeptide (Lys-Gly) (interchain with G-Cter in SUMO2)" evidence="13">
    <location>
        <position position="337"/>
    </location>
</feature>
<feature type="cross-link" description="Glycyl lysine isopeptide (Lys-Gly) (interchain with G-Cter in SUMO2)" evidence="1">
    <location>
        <position position="365"/>
    </location>
</feature>
<feature type="cross-link" description="Glycyl lysine isopeptide (Lys-Gly) (interchain with G-Cter in SUMO2)" evidence="1">
    <location>
        <position position="544"/>
    </location>
</feature>
<feature type="cross-link" description="Glycyl lysine isopeptide (Lys-Gly) (interchain with G-Cter in SUMO2)" evidence="1">
    <location>
        <position position="547"/>
    </location>
</feature>
<feature type="splice variant" id="VSP_040334" description="In isoform 3." evidence="6">
    <location>
        <begin position="1"/>
        <end position="235"/>
    </location>
</feature>
<feature type="splice variant" id="VSP_040738" description="In isoform 4." evidence="7">
    <location>
        <begin position="1"/>
        <end position="36"/>
    </location>
</feature>
<feature type="splice variant" id="VSP_040739" description="In isoform 4 and isoform 5." evidence="5 7">
    <location>
        <begin position="114"/>
        <end position="151"/>
    </location>
</feature>
<feature type="splice variant" id="VSP_040335" description="In isoform 2." evidence="8">
    <location>
        <begin position="458"/>
        <end position="653"/>
    </location>
</feature>
<feature type="sequence conflict" description="In Ref. 7; AAI54415." evidence="9" ref="7">
    <original>D</original>
    <variation>E</variation>
    <location>
        <position position="86"/>
    </location>
</feature>
<feature type="sequence conflict" description="In Ref. 4; CAE45857." evidence="9" ref="4">
    <original>L</original>
    <variation>P</variation>
    <location>
        <position position="508"/>
    </location>
</feature>
<feature type="sequence conflict" description="In Ref. 3; BAB14183." evidence="9" ref="3">
    <original>E</original>
    <variation>G</variation>
    <location>
        <position position="525"/>
    </location>
</feature>
<feature type="sequence conflict" description="In Ref. 4; CAE45857." evidence="9" ref="4">
    <original>C</original>
    <variation>Y</variation>
    <location>
        <position position="551"/>
    </location>
</feature>
<protein>
    <recommendedName>
        <fullName>Zinc finger protein 12</fullName>
    </recommendedName>
    <alternativeName>
        <fullName>Gonadotropin-inducible ovary transcription repressor 3</fullName>
        <shortName>GIOT-3</shortName>
    </alternativeName>
    <alternativeName>
        <fullName>Zinc finger protein 325</fullName>
    </alternativeName>
    <alternativeName>
        <fullName>Zinc finger protein KOX3</fullName>
    </alternativeName>
</protein>
<reference key="1">
    <citation type="journal article" date="2006" name="Biochem. Biophys. Res. Commun.">
        <title>ZNF325, a novel human zinc finger protein with a RBaK-like RB-binding domain, inhibits AP-1- and SRE-mediated transcriptional activity.</title>
        <authorList>
            <person name="Zhao Y."/>
            <person name="Zhou L."/>
            <person name="Liu B."/>
            <person name="Deng Y."/>
            <person name="Wang Y."/>
            <person name="Wang Y."/>
            <person name="Huang W."/>
            <person name="Yuan W."/>
            <person name="Wang Z."/>
            <person name="Zhu C."/>
            <person name="Liu M."/>
            <person name="Wu X."/>
            <person name="Li Y."/>
        </authorList>
    </citation>
    <scope>NUCLEOTIDE SEQUENCE [MRNA] (ISOFORM 3)</scope>
    <scope>FUNCTION</scope>
    <scope>SUBCELLULAR LOCATION</scope>
    <scope>TISSUE SPECIFICITY</scope>
    <scope>DEVELOPMENTAL STAGE</scope>
</reference>
<reference key="2">
    <citation type="submission" date="1998-12" db="EMBL/GenBank/DDBJ databases">
        <title>Identification and characterization of novel zinc finger proteins in the human ovary.</title>
        <authorList>
            <person name="Okada T."/>
            <person name="Mizutani T."/>
            <person name="Miyamoto K."/>
        </authorList>
    </citation>
    <scope>NUCLEOTIDE SEQUENCE [MRNA] (ISOFORM 2)</scope>
    <source>
        <tissue>Ovary</tissue>
    </source>
</reference>
<reference key="3">
    <citation type="journal article" date="2004" name="Nat. Genet.">
        <title>Complete sequencing and characterization of 21,243 full-length human cDNAs.</title>
        <authorList>
            <person name="Ota T."/>
            <person name="Suzuki Y."/>
            <person name="Nishikawa T."/>
            <person name="Otsuki T."/>
            <person name="Sugiyama T."/>
            <person name="Irie R."/>
            <person name="Wakamatsu A."/>
            <person name="Hayashi K."/>
            <person name="Sato H."/>
            <person name="Nagai K."/>
            <person name="Kimura K."/>
            <person name="Makita H."/>
            <person name="Sekine M."/>
            <person name="Obayashi M."/>
            <person name="Nishi T."/>
            <person name="Shibahara T."/>
            <person name="Tanaka T."/>
            <person name="Ishii S."/>
            <person name="Yamamoto J."/>
            <person name="Saito K."/>
            <person name="Kawai Y."/>
            <person name="Isono Y."/>
            <person name="Nakamura Y."/>
            <person name="Nagahari K."/>
            <person name="Murakami K."/>
            <person name="Yasuda T."/>
            <person name="Iwayanagi T."/>
            <person name="Wagatsuma M."/>
            <person name="Shiratori A."/>
            <person name="Sudo H."/>
            <person name="Hosoiri T."/>
            <person name="Kaku Y."/>
            <person name="Kodaira H."/>
            <person name="Kondo H."/>
            <person name="Sugawara M."/>
            <person name="Takahashi M."/>
            <person name="Kanda K."/>
            <person name="Yokoi T."/>
            <person name="Furuya T."/>
            <person name="Kikkawa E."/>
            <person name="Omura Y."/>
            <person name="Abe K."/>
            <person name="Kamihara K."/>
            <person name="Katsuta N."/>
            <person name="Sato K."/>
            <person name="Tanikawa M."/>
            <person name="Yamazaki M."/>
            <person name="Ninomiya K."/>
            <person name="Ishibashi T."/>
            <person name="Yamashita H."/>
            <person name="Murakawa K."/>
            <person name="Fujimori K."/>
            <person name="Tanai H."/>
            <person name="Kimata M."/>
            <person name="Watanabe M."/>
            <person name="Hiraoka S."/>
            <person name="Chiba Y."/>
            <person name="Ishida S."/>
            <person name="Ono Y."/>
            <person name="Takiguchi S."/>
            <person name="Watanabe S."/>
            <person name="Yosida M."/>
            <person name="Hotuta T."/>
            <person name="Kusano J."/>
            <person name="Kanehori K."/>
            <person name="Takahashi-Fujii A."/>
            <person name="Hara H."/>
            <person name="Tanase T.-O."/>
            <person name="Nomura Y."/>
            <person name="Togiya S."/>
            <person name="Komai F."/>
            <person name="Hara R."/>
            <person name="Takeuchi K."/>
            <person name="Arita M."/>
            <person name="Imose N."/>
            <person name="Musashino K."/>
            <person name="Yuuki H."/>
            <person name="Oshima A."/>
            <person name="Sasaki N."/>
            <person name="Aotsuka S."/>
            <person name="Yoshikawa Y."/>
            <person name="Matsunawa H."/>
            <person name="Ichihara T."/>
            <person name="Shiohata N."/>
            <person name="Sano S."/>
            <person name="Moriya S."/>
            <person name="Momiyama H."/>
            <person name="Satoh N."/>
            <person name="Takami S."/>
            <person name="Terashima Y."/>
            <person name="Suzuki O."/>
            <person name="Nakagawa S."/>
            <person name="Senoh A."/>
            <person name="Mizoguchi H."/>
            <person name="Goto Y."/>
            <person name="Shimizu F."/>
            <person name="Wakebe H."/>
            <person name="Hishigaki H."/>
            <person name="Watanabe T."/>
            <person name="Sugiyama A."/>
            <person name="Takemoto M."/>
            <person name="Kawakami B."/>
            <person name="Yamazaki M."/>
            <person name="Watanabe K."/>
            <person name="Kumagai A."/>
            <person name="Itakura S."/>
            <person name="Fukuzumi Y."/>
            <person name="Fujimori Y."/>
            <person name="Komiyama M."/>
            <person name="Tashiro H."/>
            <person name="Tanigami A."/>
            <person name="Fujiwara T."/>
            <person name="Ono T."/>
            <person name="Yamada K."/>
            <person name="Fujii Y."/>
            <person name="Ozaki K."/>
            <person name="Hirao M."/>
            <person name="Ohmori Y."/>
            <person name="Kawabata A."/>
            <person name="Hikiji T."/>
            <person name="Kobatake N."/>
            <person name="Inagaki H."/>
            <person name="Ikema Y."/>
            <person name="Okamoto S."/>
            <person name="Okitani R."/>
            <person name="Kawakami T."/>
            <person name="Noguchi S."/>
            <person name="Itoh T."/>
            <person name="Shigeta K."/>
            <person name="Senba T."/>
            <person name="Matsumura K."/>
            <person name="Nakajima Y."/>
            <person name="Mizuno T."/>
            <person name="Morinaga M."/>
            <person name="Sasaki M."/>
            <person name="Togashi T."/>
            <person name="Oyama M."/>
            <person name="Hata H."/>
            <person name="Watanabe M."/>
            <person name="Komatsu T."/>
            <person name="Mizushima-Sugano J."/>
            <person name="Satoh T."/>
            <person name="Shirai Y."/>
            <person name="Takahashi Y."/>
            <person name="Nakagawa K."/>
            <person name="Okumura K."/>
            <person name="Nagase T."/>
            <person name="Nomura N."/>
            <person name="Kikuchi H."/>
            <person name="Masuho Y."/>
            <person name="Yamashita R."/>
            <person name="Nakai K."/>
            <person name="Yada T."/>
            <person name="Nakamura Y."/>
            <person name="Ohara O."/>
            <person name="Isogai T."/>
            <person name="Sugano S."/>
        </authorList>
    </citation>
    <scope>NUCLEOTIDE SEQUENCE [LARGE SCALE MRNA] (ISOFORM 1)</scope>
    <source>
        <tissue>Cerebellum</tissue>
    </source>
</reference>
<reference key="4">
    <citation type="journal article" date="2007" name="BMC Genomics">
        <title>The full-ORF clone resource of the German cDNA consortium.</title>
        <authorList>
            <person name="Bechtel S."/>
            <person name="Rosenfelder H."/>
            <person name="Duda A."/>
            <person name="Schmidt C.P."/>
            <person name="Ernst U."/>
            <person name="Wellenreuther R."/>
            <person name="Mehrle A."/>
            <person name="Schuster C."/>
            <person name="Bahr A."/>
            <person name="Bloecker H."/>
            <person name="Heubner D."/>
            <person name="Hoerlein A."/>
            <person name="Michel G."/>
            <person name="Wedler H."/>
            <person name="Koehrer K."/>
            <person name="Ottenwaelder B."/>
            <person name="Poustka A."/>
            <person name="Wiemann S."/>
            <person name="Schupp I."/>
        </authorList>
    </citation>
    <scope>NUCLEOTIDE SEQUENCE [LARGE SCALE MRNA] (ISOFORM 4)</scope>
    <source>
        <tissue>Fetal kidney</tissue>
    </source>
</reference>
<reference key="5">
    <citation type="journal article" date="2003" name="Nature">
        <title>The DNA sequence of human chromosome 7.</title>
        <authorList>
            <person name="Hillier L.W."/>
            <person name="Fulton R.S."/>
            <person name="Fulton L.A."/>
            <person name="Graves T.A."/>
            <person name="Pepin K.H."/>
            <person name="Wagner-McPherson C."/>
            <person name="Layman D."/>
            <person name="Maas J."/>
            <person name="Jaeger S."/>
            <person name="Walker R."/>
            <person name="Wylie K."/>
            <person name="Sekhon M."/>
            <person name="Becker M.C."/>
            <person name="O'Laughlin M.D."/>
            <person name="Schaller M.E."/>
            <person name="Fewell G.A."/>
            <person name="Delehaunty K.D."/>
            <person name="Miner T.L."/>
            <person name="Nash W.E."/>
            <person name="Cordes M."/>
            <person name="Du H."/>
            <person name="Sun H."/>
            <person name="Edwards J."/>
            <person name="Bradshaw-Cordum H."/>
            <person name="Ali J."/>
            <person name="Andrews S."/>
            <person name="Isak A."/>
            <person name="Vanbrunt A."/>
            <person name="Nguyen C."/>
            <person name="Du F."/>
            <person name="Lamar B."/>
            <person name="Courtney L."/>
            <person name="Kalicki J."/>
            <person name="Ozersky P."/>
            <person name="Bielicki L."/>
            <person name="Scott K."/>
            <person name="Holmes A."/>
            <person name="Harkins R."/>
            <person name="Harris A."/>
            <person name="Strong C.M."/>
            <person name="Hou S."/>
            <person name="Tomlinson C."/>
            <person name="Dauphin-Kohlberg S."/>
            <person name="Kozlowicz-Reilly A."/>
            <person name="Leonard S."/>
            <person name="Rohlfing T."/>
            <person name="Rock S.M."/>
            <person name="Tin-Wollam A.-M."/>
            <person name="Abbott A."/>
            <person name="Minx P."/>
            <person name="Maupin R."/>
            <person name="Strowmatt C."/>
            <person name="Latreille P."/>
            <person name="Miller N."/>
            <person name="Johnson D."/>
            <person name="Murray J."/>
            <person name="Woessner J.P."/>
            <person name="Wendl M.C."/>
            <person name="Yang S.-P."/>
            <person name="Schultz B.R."/>
            <person name="Wallis J.W."/>
            <person name="Spieth J."/>
            <person name="Bieri T.A."/>
            <person name="Nelson J.O."/>
            <person name="Berkowicz N."/>
            <person name="Wohldmann P.E."/>
            <person name="Cook L.L."/>
            <person name="Hickenbotham M.T."/>
            <person name="Eldred J."/>
            <person name="Williams D."/>
            <person name="Bedell J.A."/>
            <person name="Mardis E.R."/>
            <person name="Clifton S.W."/>
            <person name="Chissoe S.L."/>
            <person name="Marra M.A."/>
            <person name="Raymond C."/>
            <person name="Haugen E."/>
            <person name="Gillett W."/>
            <person name="Zhou Y."/>
            <person name="James R."/>
            <person name="Phelps K."/>
            <person name="Iadanoto S."/>
            <person name="Bubb K."/>
            <person name="Simms E."/>
            <person name="Levy R."/>
            <person name="Clendenning J."/>
            <person name="Kaul R."/>
            <person name="Kent W.J."/>
            <person name="Furey T.S."/>
            <person name="Baertsch R.A."/>
            <person name="Brent M.R."/>
            <person name="Keibler E."/>
            <person name="Flicek P."/>
            <person name="Bork P."/>
            <person name="Suyama M."/>
            <person name="Bailey J.A."/>
            <person name="Portnoy M.E."/>
            <person name="Torrents D."/>
            <person name="Chinwalla A.T."/>
            <person name="Gish W.R."/>
            <person name="Eddy S.R."/>
            <person name="McPherson J.D."/>
            <person name="Olson M.V."/>
            <person name="Eichler E.E."/>
            <person name="Green E.D."/>
            <person name="Waterston R.H."/>
            <person name="Wilson R.K."/>
        </authorList>
    </citation>
    <scope>NUCLEOTIDE SEQUENCE [LARGE SCALE GENOMIC DNA]</scope>
</reference>
<reference key="6">
    <citation type="submission" date="2005-07" db="EMBL/GenBank/DDBJ databases">
        <authorList>
            <person name="Mural R.J."/>
            <person name="Istrail S."/>
            <person name="Sutton G.G."/>
            <person name="Florea L."/>
            <person name="Halpern A.L."/>
            <person name="Mobarry C.M."/>
            <person name="Lippert R."/>
            <person name="Walenz B."/>
            <person name="Shatkay H."/>
            <person name="Dew I."/>
            <person name="Miller J.R."/>
            <person name="Flanigan M.J."/>
            <person name="Edwards N.J."/>
            <person name="Bolanos R."/>
            <person name="Fasulo D."/>
            <person name="Halldorsson B.V."/>
            <person name="Hannenhalli S."/>
            <person name="Turner R."/>
            <person name="Yooseph S."/>
            <person name="Lu F."/>
            <person name="Nusskern D.R."/>
            <person name="Shue B.C."/>
            <person name="Zheng X.H."/>
            <person name="Zhong F."/>
            <person name="Delcher A.L."/>
            <person name="Huson D.H."/>
            <person name="Kravitz S.A."/>
            <person name="Mouchard L."/>
            <person name="Reinert K."/>
            <person name="Remington K.A."/>
            <person name="Clark A.G."/>
            <person name="Waterman M.S."/>
            <person name="Eichler E.E."/>
            <person name="Adams M.D."/>
            <person name="Hunkapiller M.W."/>
            <person name="Myers E.W."/>
            <person name="Venter J.C."/>
        </authorList>
    </citation>
    <scope>NUCLEOTIDE SEQUENCE [LARGE SCALE GENOMIC DNA]</scope>
</reference>
<reference key="7">
    <citation type="journal article" date="2004" name="Genome Res.">
        <title>The status, quality, and expansion of the NIH full-length cDNA project: the Mammalian Gene Collection (MGC).</title>
        <authorList>
            <consortium name="The MGC Project Team"/>
        </authorList>
    </citation>
    <scope>NUCLEOTIDE SEQUENCE [LARGE SCALE MRNA] (ISOFORMS 1 AND 5)</scope>
    <source>
        <tissue>Leiomyosarcoma</tissue>
        <tissue>Lung</tissue>
    </source>
</reference>
<reference key="8">
    <citation type="journal article" date="1990" name="New Biol.">
        <title>Multiple genes encoding zinc finger domains are expressed in human T cells.</title>
        <authorList>
            <person name="Thiesen H.-J."/>
        </authorList>
    </citation>
    <scope>NUCLEOTIDE SEQUENCE [MRNA] OF 409-464</scope>
    <source>
        <tissue>Lymphoid tissue</tissue>
    </source>
</reference>
<reference key="9">
    <citation type="journal article" date="2014" name="Nat. Struct. Mol. Biol.">
        <title>Uncovering global SUMOylation signaling networks in a site-specific manner.</title>
        <authorList>
            <person name="Hendriks I.A."/>
            <person name="D'Souza R.C."/>
            <person name="Yang B."/>
            <person name="Verlaan-de Vries M."/>
            <person name="Mann M."/>
            <person name="Vertegaal A.C."/>
        </authorList>
    </citation>
    <scope>SUMOYLATION [LARGE SCALE ANALYSIS] AT LYS-179</scope>
    <scope>IDENTIFICATION BY MASS SPECTROMETRY [LARGE SCALE ANALYSIS]</scope>
</reference>
<reference key="10">
    <citation type="journal article" date="2015" name="Cell Rep.">
        <title>SUMO-2 orchestrates chromatin modifiers in response to DNA damage.</title>
        <authorList>
            <person name="Hendriks I.A."/>
            <person name="Treffers L.W."/>
            <person name="Verlaan-de Vries M."/>
            <person name="Olsen J.V."/>
            <person name="Vertegaal A.C."/>
        </authorList>
    </citation>
    <scope>SUMOYLATION [LARGE SCALE ANALYSIS] AT LYS-179</scope>
    <scope>IDENTIFICATION BY MASS SPECTROMETRY [LARGE SCALE ANALYSIS]</scope>
</reference>
<reference key="11">
    <citation type="journal article" date="2015" name="Mol. Cell. Proteomics">
        <title>System-wide analysis of SUMOylation dynamics in response to replication stress reveals novel small ubiquitin-like modified target proteins and acceptor lysines relevant for genome stability.</title>
        <authorList>
            <person name="Xiao Z."/>
            <person name="Chang J.G."/>
            <person name="Hendriks I.A."/>
            <person name="Sigurdsson J.O."/>
            <person name="Olsen J.V."/>
            <person name="Vertegaal A.C."/>
        </authorList>
    </citation>
    <scope>SUMOYLATION [LARGE SCALE ANALYSIS] AT LYS-98 AND LYS-239</scope>
    <scope>IDENTIFICATION BY MASS SPECTROMETRY [LARGE SCALE ANALYSIS]</scope>
</reference>
<reference key="12">
    <citation type="journal article" date="2017" name="Nat. Struct. Mol. Biol.">
        <title>Site-specific mapping of the human SUMO proteome reveals co-modification with phosphorylation.</title>
        <authorList>
            <person name="Hendriks I.A."/>
            <person name="Lyon D."/>
            <person name="Young C."/>
            <person name="Jensen L.J."/>
            <person name="Vertegaal A.C."/>
            <person name="Nielsen M.L."/>
        </authorList>
    </citation>
    <scope>SUMOYLATION [LARGE SCALE ANALYSIS] AT LYS-3; LYS-98; LYS-179; LYS-182; LYS-209; LYS-215; LYS-224; LYS-239; LYS-309 AND LYS-337</scope>
    <scope>IDENTIFICATION BY MASS SPECTROMETRY [LARGE SCALE ANALYSIS]</scope>
</reference>
<comment type="function">
    <text evidence="4">Transcriptional repressor which suppresses activation protein 1 (AP-1)- and serum response element (SRE)-mediated transcriptional activity.</text>
</comment>
<comment type="interaction">
    <interactant intactId="EBI-11278550">
        <id>P17014</id>
    </interactant>
    <interactant intactId="EBI-3866279">
        <id>Q9BWT7</id>
        <label>CARD10</label>
    </interactant>
    <organismsDiffer>false</organismsDiffer>
    <experiments>3</experiments>
</comment>
<comment type="interaction">
    <interactant intactId="EBI-11278550">
        <id>P17014</id>
    </interactant>
    <interactant intactId="EBI-307531">
        <id>P23508</id>
        <label>MCC</label>
    </interactant>
    <organismsDiffer>false</organismsDiffer>
    <experiments>3</experiments>
</comment>
<comment type="interaction">
    <interactant intactId="EBI-11278550">
        <id>P17014</id>
    </interactant>
    <interactant intactId="EBI-724076">
        <id>Q99750</id>
        <label>MDFI</label>
    </interactant>
    <organismsDiffer>false</organismsDiffer>
    <experiments>3</experiments>
</comment>
<comment type="interaction">
    <interactant intactId="EBI-11278550">
        <id>P17014</id>
    </interactant>
    <interactant intactId="EBI-928842">
        <id>Q9GZM8</id>
        <label>NDEL1</label>
    </interactant>
    <organismsDiffer>false</organismsDiffer>
    <experiments>3</experiments>
</comment>
<comment type="interaction">
    <interactant intactId="EBI-11278550">
        <id>P17014</id>
    </interactant>
    <interactant intactId="EBI-712466">
        <id>Q16623</id>
        <label>STX1A</label>
    </interactant>
    <organismsDiffer>false</organismsDiffer>
    <experiments>3</experiments>
</comment>
<comment type="subcellular location">
    <subcellularLocation>
        <location evidence="4">Nucleus</location>
    </subcellularLocation>
</comment>
<comment type="alternative products">
    <event type="alternative splicing"/>
    <isoform>
        <id>P17014-1</id>
        <name>1</name>
        <sequence type="displayed"/>
    </isoform>
    <isoform>
        <id>P17014-2</id>
        <name>2</name>
        <sequence type="described" ref="VSP_040335"/>
    </isoform>
    <isoform>
        <id>P17014-3</id>
        <name>3</name>
        <sequence type="described" ref="VSP_040334"/>
    </isoform>
    <isoform>
        <id>P17014-4</id>
        <name>4</name>
        <sequence type="described" ref="VSP_040738 VSP_040739"/>
    </isoform>
    <isoform>
        <id>P17014-5</id>
        <name>5</name>
        <sequence type="described" ref="VSP_040739"/>
    </isoform>
</comment>
<comment type="tissue specificity">
    <text evidence="4">Widely expressed in various adult tissues and embryonic developmental stages (isoform 3).</text>
</comment>
<comment type="developmental stage">
    <text evidence="4">Shows a relatively higher expression level in the fetal brain and a lower level in adult. The expression level in liver is highest at 16 weeks of development and declines from 16 to 24 weeks and is lower in adult. Expressed strongly in fetal heart on 18 and 24 weeks, but relatively weakly on the other development stage of embryo, and then reaches a higher level in adult (isoform 3).</text>
</comment>
<comment type="similarity">
    <text evidence="9">Belongs to the krueppel C2H2-type zinc-finger protein family.</text>
</comment>
<comment type="sequence caution" evidence="9">
    <conflict type="erroneous initiation">
        <sequence resource="EMBL-CDS" id="BAB14183"/>
    </conflict>
    <text>Truncated N-terminus.</text>
</comment>
<comment type="sequence caution" evidence="9">
    <conflict type="erroneous initiation">
        <sequence resource="EMBL-CDS" id="BAG57306"/>
    </conflict>
    <text>Extended N-terminus.</text>
</comment>
<accession>P17014</accession>
<accession>A8MYC4</accession>
<accession>A8WFQ8</accession>
<accession>B2RNQ7</accession>
<accession>B4DF45</accession>
<accession>Q6N016</accession>
<accession>Q8NHZ0</accession>
<accession>Q9H9P0</accession>
<accession>Q9ULZ6</accession>
<organism>
    <name type="scientific">Homo sapiens</name>
    <name type="common">Human</name>
    <dbReference type="NCBI Taxonomy" id="9606"/>
    <lineage>
        <taxon>Eukaryota</taxon>
        <taxon>Metazoa</taxon>
        <taxon>Chordata</taxon>
        <taxon>Craniata</taxon>
        <taxon>Vertebrata</taxon>
        <taxon>Euteleostomi</taxon>
        <taxon>Mammalia</taxon>
        <taxon>Eutheria</taxon>
        <taxon>Euarchontoglires</taxon>
        <taxon>Primates</taxon>
        <taxon>Haplorrhini</taxon>
        <taxon>Catarrhini</taxon>
        <taxon>Hominidae</taxon>
        <taxon>Homo</taxon>
    </lineage>
</organism>
<evidence type="ECO:0000250" key="1">
    <source>
        <dbReference type="UniProtKB" id="Q9NYW8"/>
    </source>
</evidence>
<evidence type="ECO:0000255" key="2">
    <source>
        <dbReference type="PROSITE-ProRule" id="PRU00042"/>
    </source>
</evidence>
<evidence type="ECO:0000255" key="3">
    <source>
        <dbReference type="PROSITE-ProRule" id="PRU00119"/>
    </source>
</evidence>
<evidence type="ECO:0000269" key="4">
    <source>
    </source>
</evidence>
<evidence type="ECO:0000303" key="5">
    <source>
    </source>
</evidence>
<evidence type="ECO:0000303" key="6">
    <source>
    </source>
</evidence>
<evidence type="ECO:0000303" key="7">
    <source>
    </source>
</evidence>
<evidence type="ECO:0000303" key="8">
    <source ref="2"/>
</evidence>
<evidence type="ECO:0000305" key="9"/>
<evidence type="ECO:0007744" key="10">
    <source>
    </source>
</evidence>
<evidence type="ECO:0007744" key="11">
    <source>
    </source>
</evidence>
<evidence type="ECO:0007744" key="12">
    <source>
    </source>
</evidence>
<evidence type="ECO:0007744" key="13">
    <source>
    </source>
</evidence>
<name>ZNF12_HUMAN</name>
<sequence length="697" mass="81202">MNKSLGPVSFKDVAVDFTQEEWQQLDPEQKITYRDVMLENYSNLVSVGYHIIKPDVISKLEQGEEPWIVEGEFLLQSYPDEVWQTDDLIERIQEEENKPSRQTVFIETLIEERGNVPGKTFDVETNPVPSRKIAYKNSLCDSCEKCLTSVSEYISSDGSYARMKADECSGCGKSLLHIKLEKTHPGDQAYEFNQNGEPYTLNEESLYQKIRILEKPFEYIECQKAFQKDTVFVNHMEEKPYKWNGSEIAFLQMSDLTVHQTSHMEMKPYECSECGKSFCKKSKFIIHQRTHTGEKPYECNQCGKSFCQKGTLTVHQRTHTGEKPYECNECGKNFYQKLHLIQHQRTHSGEKPYECSYCGKSFCQKTHLTQHQRTHSGERPYVCHDCGKTFSQKSALNDHQKIHTGVKLYKCSECGKCFCRKSTLTTHLRTHTGEKPYECNECGKFFSRLSYLTVHYRTHSGEKPYECNECGKTFYLNSALMRHQRVHTGEKPYECNECGKLFSQLSYLTIHHRTHSGVKPYECSECGKTFYQNSALCRHRRIHKGEKPYECYICGKFFSQMSYLTIHHRIHSGEKPYECSECGKTFCQNSALNRHQRTHTGEKAYECYECGKCFSQMSYLTIHHRIHSGEKPFECNECGKAFSRMSYLTVHYRTHSGEKPYECTECGKKFYHKSAFNSHQRIHRRGNMNVIDVGRLL</sequence>
<dbReference type="EMBL" id="AF505656">
    <property type="protein sequence ID" value="AAM28195.1"/>
    <property type="molecule type" value="mRNA"/>
</dbReference>
<dbReference type="EMBL" id="AB021643">
    <property type="protein sequence ID" value="BAA86989.1"/>
    <property type="molecule type" value="mRNA"/>
</dbReference>
<dbReference type="EMBL" id="AK022691">
    <property type="protein sequence ID" value="BAB14183.1"/>
    <property type="status" value="ALT_INIT"/>
    <property type="molecule type" value="mRNA"/>
</dbReference>
<dbReference type="EMBL" id="AK293925">
    <property type="protein sequence ID" value="BAG57306.1"/>
    <property type="status" value="ALT_INIT"/>
    <property type="molecule type" value="mRNA"/>
</dbReference>
<dbReference type="EMBL" id="BX640749">
    <property type="protein sequence ID" value="CAE45857.1"/>
    <property type="molecule type" value="mRNA"/>
</dbReference>
<dbReference type="EMBL" id="AC073343">
    <property type="status" value="NOT_ANNOTATED_CDS"/>
    <property type="molecule type" value="Genomic_DNA"/>
</dbReference>
<dbReference type="EMBL" id="CH878731">
    <property type="protein sequence ID" value="EAW55016.1"/>
    <property type="molecule type" value="Genomic_DNA"/>
</dbReference>
<dbReference type="EMBL" id="BC051892">
    <property type="status" value="NOT_ANNOTATED_CDS"/>
    <property type="molecule type" value="mRNA"/>
</dbReference>
<dbReference type="EMBL" id="BC137068">
    <property type="protein sequence ID" value="AAI37069.1"/>
    <property type="molecule type" value="mRNA"/>
</dbReference>
<dbReference type="EMBL" id="BC137069">
    <property type="protein sequence ID" value="AAI37070.1"/>
    <property type="molecule type" value="mRNA"/>
</dbReference>
<dbReference type="EMBL" id="BC154414">
    <property type="protein sequence ID" value="AAI54415.1"/>
    <property type="molecule type" value="mRNA"/>
</dbReference>
<dbReference type="EMBL" id="X52334">
    <property type="protein sequence ID" value="CAA36560.1"/>
    <property type="molecule type" value="mRNA"/>
</dbReference>
<dbReference type="CCDS" id="CCDS47538.1">
    <molecule id="P17014-1"/>
</dbReference>
<dbReference type="CCDS" id="CCDS47539.1">
    <molecule id="P17014-5"/>
</dbReference>
<dbReference type="PIR" id="I37970">
    <property type="entry name" value="I37970"/>
</dbReference>
<dbReference type="RefSeq" id="NP_008887.2">
    <molecule id="P17014-5"/>
    <property type="nucleotide sequence ID" value="NM_006956.3"/>
</dbReference>
<dbReference type="RefSeq" id="NP_057349.2">
    <molecule id="P17014-1"/>
    <property type="nucleotide sequence ID" value="NM_016265.4"/>
</dbReference>
<dbReference type="SMR" id="P17014"/>
<dbReference type="BioGRID" id="113391">
    <property type="interactions" value="21"/>
</dbReference>
<dbReference type="FunCoup" id="P17014">
    <property type="interactions" value="1454"/>
</dbReference>
<dbReference type="IntAct" id="P17014">
    <property type="interactions" value="12"/>
</dbReference>
<dbReference type="STRING" id="9606.ENSP00000385939"/>
<dbReference type="iPTMnet" id="P17014"/>
<dbReference type="PhosphoSitePlus" id="P17014"/>
<dbReference type="BioMuta" id="ZNF12"/>
<dbReference type="DMDM" id="317373491"/>
<dbReference type="jPOST" id="P17014"/>
<dbReference type="MassIVE" id="P17014"/>
<dbReference type="PaxDb" id="9606-ENSP00000385939"/>
<dbReference type="PeptideAtlas" id="P17014"/>
<dbReference type="ProteomicsDB" id="53409">
    <molecule id="P17014-1"/>
</dbReference>
<dbReference type="ProteomicsDB" id="53410">
    <molecule id="P17014-2"/>
</dbReference>
<dbReference type="ProteomicsDB" id="53411">
    <molecule id="P17014-3"/>
</dbReference>
<dbReference type="ProteomicsDB" id="53412">
    <molecule id="P17014-4"/>
</dbReference>
<dbReference type="ProteomicsDB" id="53413">
    <molecule id="P17014-5"/>
</dbReference>
<dbReference type="Pumba" id="P17014"/>
<dbReference type="Antibodypedia" id="6020">
    <property type="antibodies" value="87 antibodies from 19 providers"/>
</dbReference>
<dbReference type="DNASU" id="7559"/>
<dbReference type="Ensembl" id="ENST00000342651.9">
    <molecule id="P17014-5"/>
    <property type="protein sequence ID" value="ENSP00000344745.5"/>
    <property type="gene ID" value="ENSG00000164631.19"/>
</dbReference>
<dbReference type="Ensembl" id="ENST00000404360.5">
    <molecule id="P17014-4"/>
    <property type="protein sequence ID" value="ENSP00000384405.1"/>
    <property type="gene ID" value="ENSG00000164631.19"/>
</dbReference>
<dbReference type="Ensembl" id="ENST00000405858.6">
    <molecule id="P17014-1"/>
    <property type="protein sequence ID" value="ENSP00000385939.1"/>
    <property type="gene ID" value="ENSG00000164631.19"/>
</dbReference>
<dbReference type="GeneID" id="7559"/>
<dbReference type="KEGG" id="hsa:7559"/>
<dbReference type="MANE-Select" id="ENST00000405858.6">
    <property type="protein sequence ID" value="ENSP00000385939.1"/>
    <property type="RefSeq nucleotide sequence ID" value="NM_016265.4"/>
    <property type="RefSeq protein sequence ID" value="NP_057349.2"/>
</dbReference>
<dbReference type="UCSC" id="uc003sqs.3">
    <molecule id="P17014-1"/>
    <property type="organism name" value="human"/>
</dbReference>
<dbReference type="AGR" id="HGNC:12902"/>
<dbReference type="CTD" id="7559"/>
<dbReference type="DisGeNET" id="7559"/>
<dbReference type="GeneCards" id="ZNF12"/>
<dbReference type="HGNC" id="HGNC:12902">
    <property type="gene designation" value="ZNF12"/>
</dbReference>
<dbReference type="HPA" id="ENSG00000164631">
    <property type="expression patterns" value="Low tissue specificity"/>
</dbReference>
<dbReference type="MIM" id="194536">
    <property type="type" value="gene"/>
</dbReference>
<dbReference type="neXtProt" id="NX_P17014"/>
<dbReference type="OpenTargets" id="ENSG00000164631"/>
<dbReference type="PharmGKB" id="PA134931984"/>
<dbReference type="PharmGKB" id="PA37491"/>
<dbReference type="VEuPathDB" id="HostDB:ENSG00000164631"/>
<dbReference type="eggNOG" id="KOG1721">
    <property type="taxonomic scope" value="Eukaryota"/>
</dbReference>
<dbReference type="GeneTree" id="ENSGT00940000154303"/>
<dbReference type="HOGENOM" id="CLU_002678_44_5_1"/>
<dbReference type="InParanoid" id="P17014"/>
<dbReference type="OMA" id="DYHCYQM"/>
<dbReference type="OrthoDB" id="9411774at2759"/>
<dbReference type="PAN-GO" id="P17014">
    <property type="GO annotations" value="4 GO annotations based on evolutionary models"/>
</dbReference>
<dbReference type="PhylomeDB" id="P17014"/>
<dbReference type="TreeFam" id="TF350803"/>
<dbReference type="PathwayCommons" id="P17014"/>
<dbReference type="Reactome" id="R-HSA-212436">
    <property type="pathway name" value="Generic Transcription Pathway"/>
</dbReference>
<dbReference type="SignaLink" id="P17014"/>
<dbReference type="BioGRID-ORCS" id="7559">
    <property type="hits" value="9 hits in 1181 CRISPR screens"/>
</dbReference>
<dbReference type="ChiTaRS" id="ZNF12">
    <property type="organism name" value="human"/>
</dbReference>
<dbReference type="GenomeRNAi" id="7559"/>
<dbReference type="Pharos" id="P17014">
    <property type="development level" value="Tbio"/>
</dbReference>
<dbReference type="PRO" id="PR:P17014"/>
<dbReference type="Proteomes" id="UP000005640">
    <property type="component" value="Chromosome 7"/>
</dbReference>
<dbReference type="RNAct" id="P17014">
    <property type="molecule type" value="protein"/>
</dbReference>
<dbReference type="Bgee" id="ENSG00000164631">
    <property type="expression patterns" value="Expressed in cauda epididymis and 208 other cell types or tissues"/>
</dbReference>
<dbReference type="ExpressionAtlas" id="P17014">
    <property type="expression patterns" value="baseline and differential"/>
</dbReference>
<dbReference type="GO" id="GO:0005813">
    <property type="term" value="C:centrosome"/>
    <property type="evidence" value="ECO:0000314"/>
    <property type="project" value="HPA"/>
</dbReference>
<dbReference type="GO" id="GO:0005654">
    <property type="term" value="C:nucleoplasm"/>
    <property type="evidence" value="ECO:0000314"/>
    <property type="project" value="HPA"/>
</dbReference>
<dbReference type="GO" id="GO:0005634">
    <property type="term" value="C:nucleus"/>
    <property type="evidence" value="ECO:0000314"/>
    <property type="project" value="UniProtKB"/>
</dbReference>
<dbReference type="GO" id="GO:0000981">
    <property type="term" value="F:DNA-binding transcription factor activity, RNA polymerase II-specific"/>
    <property type="evidence" value="ECO:0000318"/>
    <property type="project" value="GO_Central"/>
</dbReference>
<dbReference type="GO" id="GO:0000978">
    <property type="term" value="F:RNA polymerase II cis-regulatory region sequence-specific DNA binding"/>
    <property type="evidence" value="ECO:0000318"/>
    <property type="project" value="GO_Central"/>
</dbReference>
<dbReference type="GO" id="GO:1990837">
    <property type="term" value="F:sequence-specific double-stranded DNA binding"/>
    <property type="evidence" value="ECO:0000314"/>
    <property type="project" value="ARUK-UCL"/>
</dbReference>
<dbReference type="GO" id="GO:0008270">
    <property type="term" value="F:zinc ion binding"/>
    <property type="evidence" value="ECO:0007669"/>
    <property type="project" value="UniProtKB-KW"/>
</dbReference>
<dbReference type="GO" id="GO:0045892">
    <property type="term" value="P:negative regulation of DNA-templated transcription"/>
    <property type="evidence" value="ECO:0000314"/>
    <property type="project" value="UniProtKB"/>
</dbReference>
<dbReference type="GO" id="GO:0006357">
    <property type="term" value="P:regulation of transcription by RNA polymerase II"/>
    <property type="evidence" value="ECO:0000318"/>
    <property type="project" value="GO_Central"/>
</dbReference>
<dbReference type="CDD" id="cd07765">
    <property type="entry name" value="KRAB_A-box"/>
    <property type="match status" value="1"/>
</dbReference>
<dbReference type="FunFam" id="3.30.160.60:FF:000012">
    <property type="entry name" value="RB-associated KRAB zinc finger protein-like"/>
    <property type="match status" value="2"/>
</dbReference>
<dbReference type="FunFam" id="3.30.160.60:FF:000666">
    <property type="entry name" value="RB-associated KRAB zinc finger protein-like"/>
    <property type="match status" value="2"/>
</dbReference>
<dbReference type="FunFam" id="3.30.160.60:FF:001354">
    <property type="entry name" value="RB-associated KRAB zinc finger protein-like"/>
    <property type="match status" value="1"/>
</dbReference>
<dbReference type="FunFam" id="3.30.160.60:FF:000957">
    <property type="entry name" value="Zinc finger protein 12"/>
    <property type="match status" value="1"/>
</dbReference>
<dbReference type="FunFam" id="3.30.160.60:FF:000478">
    <property type="entry name" value="Zinc finger protein 133"/>
    <property type="match status" value="1"/>
</dbReference>
<dbReference type="FunFam" id="3.30.160.60:FF:000551">
    <property type="entry name" value="zinc finger protein 197 isoform X1"/>
    <property type="match status" value="1"/>
</dbReference>
<dbReference type="FunFam" id="3.30.160.60:FF:001158">
    <property type="entry name" value="zinc finger protein 22"/>
    <property type="match status" value="1"/>
</dbReference>
<dbReference type="FunFam" id="3.30.160.60:FF:002343">
    <property type="entry name" value="Zinc finger protein 33A"/>
    <property type="match status" value="1"/>
</dbReference>
<dbReference type="FunFam" id="3.30.160.60:FF:001498">
    <property type="entry name" value="Zinc finger protein 404"/>
    <property type="match status" value="1"/>
</dbReference>
<dbReference type="FunFam" id="3.30.160.60:FF:001462">
    <property type="entry name" value="Zinc finger protein 502, isoform CRA_a"/>
    <property type="match status" value="1"/>
</dbReference>
<dbReference type="FunFam" id="3.30.160.60:FF:000200">
    <property type="entry name" value="zinc finger protein 510 isoform X2"/>
    <property type="match status" value="1"/>
</dbReference>
<dbReference type="FunFam" id="3.30.160.60:FF:002254">
    <property type="entry name" value="Zinc finger protein 540"/>
    <property type="match status" value="2"/>
</dbReference>
<dbReference type="Gene3D" id="6.10.140.140">
    <property type="match status" value="1"/>
</dbReference>
<dbReference type="Gene3D" id="3.30.160.60">
    <property type="entry name" value="Classic Zinc Finger"/>
    <property type="match status" value="15"/>
</dbReference>
<dbReference type="InterPro" id="IPR050589">
    <property type="entry name" value="Ikaros_C2H2-ZF"/>
</dbReference>
<dbReference type="InterPro" id="IPR001909">
    <property type="entry name" value="KRAB"/>
</dbReference>
<dbReference type="InterPro" id="IPR036051">
    <property type="entry name" value="KRAB_dom_sf"/>
</dbReference>
<dbReference type="InterPro" id="IPR036236">
    <property type="entry name" value="Znf_C2H2_sf"/>
</dbReference>
<dbReference type="InterPro" id="IPR013087">
    <property type="entry name" value="Znf_C2H2_type"/>
</dbReference>
<dbReference type="PANTHER" id="PTHR24404">
    <property type="entry name" value="ZINC FINGER PROTEIN"/>
    <property type="match status" value="1"/>
</dbReference>
<dbReference type="PANTHER" id="PTHR24404:SF97">
    <property type="entry name" value="ZINC FINGER PROTEIN 350"/>
    <property type="match status" value="1"/>
</dbReference>
<dbReference type="Pfam" id="PF01352">
    <property type="entry name" value="KRAB"/>
    <property type="match status" value="1"/>
</dbReference>
<dbReference type="Pfam" id="PF00096">
    <property type="entry name" value="zf-C2H2"/>
    <property type="match status" value="13"/>
</dbReference>
<dbReference type="Pfam" id="PF13465">
    <property type="entry name" value="zf-H2C2_2"/>
    <property type="match status" value="1"/>
</dbReference>
<dbReference type="SMART" id="SM00349">
    <property type="entry name" value="KRAB"/>
    <property type="match status" value="1"/>
</dbReference>
<dbReference type="SMART" id="SM00355">
    <property type="entry name" value="ZnF_C2H2"/>
    <property type="match status" value="15"/>
</dbReference>
<dbReference type="SUPFAM" id="SSF57667">
    <property type="entry name" value="beta-beta-alpha zinc fingers"/>
    <property type="match status" value="10"/>
</dbReference>
<dbReference type="SUPFAM" id="SSF109640">
    <property type="entry name" value="KRAB domain (Kruppel-associated box)"/>
    <property type="match status" value="1"/>
</dbReference>
<dbReference type="PROSITE" id="PS50805">
    <property type="entry name" value="KRAB"/>
    <property type="match status" value="1"/>
</dbReference>
<dbReference type="PROSITE" id="PS00028">
    <property type="entry name" value="ZINC_FINGER_C2H2_1"/>
    <property type="match status" value="15"/>
</dbReference>
<dbReference type="PROSITE" id="PS50157">
    <property type="entry name" value="ZINC_FINGER_C2H2_2"/>
    <property type="match status" value="15"/>
</dbReference>
<keyword id="KW-0025">Alternative splicing</keyword>
<keyword id="KW-0238">DNA-binding</keyword>
<keyword id="KW-1017">Isopeptide bond</keyword>
<keyword id="KW-0479">Metal-binding</keyword>
<keyword id="KW-0539">Nucleus</keyword>
<keyword id="KW-1267">Proteomics identification</keyword>
<keyword id="KW-1185">Reference proteome</keyword>
<keyword id="KW-0677">Repeat</keyword>
<keyword id="KW-0678">Repressor</keyword>
<keyword id="KW-0804">Transcription</keyword>
<keyword id="KW-0805">Transcription regulation</keyword>
<keyword id="KW-0832">Ubl conjugation</keyword>
<keyword id="KW-0862">Zinc</keyword>
<keyword id="KW-0863">Zinc-finger</keyword>